<comment type="function">
    <text evidence="1">Monokine with inflammatory and chemokinetic properties.</text>
</comment>
<comment type="subunit">
    <text evidence="1">Homodimer. Interacts with CCR5 (By similarity).</text>
</comment>
<comment type="subcellular location">
    <subcellularLocation>
        <location evidence="1">Secreted</location>
    </subcellularLocation>
</comment>
<comment type="tissue specificity">
    <text evidence="2">Detected in peripheral blood mononuclear cells and lymph nodes.</text>
</comment>
<comment type="induction">
    <text evidence="2">Up-regulated in SIV or SHIV infected monkeys with decreased CD4+ T-cell count.</text>
</comment>
<comment type="similarity">
    <text evidence="3">Belongs to the intercrine beta (chemokine CC) family.</text>
</comment>
<organism>
    <name type="scientific">Macaca mulatta</name>
    <name type="common">Rhesus macaque</name>
    <dbReference type="NCBI Taxonomy" id="9544"/>
    <lineage>
        <taxon>Eukaryota</taxon>
        <taxon>Metazoa</taxon>
        <taxon>Chordata</taxon>
        <taxon>Craniata</taxon>
        <taxon>Vertebrata</taxon>
        <taxon>Euteleostomi</taxon>
        <taxon>Mammalia</taxon>
        <taxon>Eutheria</taxon>
        <taxon>Euarchontoglires</taxon>
        <taxon>Primates</taxon>
        <taxon>Haplorrhini</taxon>
        <taxon>Catarrhini</taxon>
        <taxon>Cercopithecidae</taxon>
        <taxon>Cercopithecinae</taxon>
        <taxon>Macaca</taxon>
    </lineage>
</organism>
<keyword id="KW-0145">Chemotaxis</keyword>
<keyword id="KW-0202">Cytokine</keyword>
<keyword id="KW-1015">Disulfide bond</keyword>
<keyword id="KW-0395">Inflammatory response</keyword>
<keyword id="KW-1185">Reference proteome</keyword>
<keyword id="KW-0964">Secreted</keyword>
<keyword id="KW-0732">Signal</keyword>
<evidence type="ECO:0000250" key="1"/>
<evidence type="ECO:0000269" key="2">
    <source>
    </source>
</evidence>
<evidence type="ECO:0000305" key="3"/>
<reference key="1">
    <citation type="journal article" date="2002" name="Cytokine">
        <title>Molecular cloning and sequencing of 25 different rhesus macaque chemokine cDNAs reveals evolutionary conservation among C, CC, CXC, and CX3C families of chemokines.</title>
        <authorList>
            <person name="Basu S."/>
            <person name="Schaefer T.M."/>
            <person name="Ghosh M."/>
            <person name="Fuller C.L."/>
            <person name="Reinhart T.A."/>
        </authorList>
    </citation>
    <scope>NUCLEOTIDE SEQUENCE [MRNA]</scope>
    <scope>IDENTIFICATION</scope>
</reference>
<reference key="2">
    <citation type="journal article" date="2002" name="AIDS Res. Hum. Retroviruses">
        <title>Quantitation of simian cytokine and beta-chemokine mRNAs, using real-time reverse transcriptase-polymerase chain reaction: variations in expression during chronic primate lentivirus infection.</title>
        <authorList>
            <person name="Hofmann-Lehmann R."/>
            <person name="Williams A.L."/>
            <person name="Swenerton R.K."/>
            <person name="Li P.-L."/>
            <person name="Rasmussen R.A."/>
            <person name="Chenine A.-L."/>
            <person name="McClure H.M."/>
            <person name="Ruprecht R.M."/>
        </authorList>
    </citation>
    <scope>NUCLEOTIDE SEQUENCE [MRNA] OF 35-83</scope>
    <scope>INDUCTION</scope>
    <scope>TISSUE SPECIFICITY</scope>
</reference>
<sequence>MKLCVTVLSLLVLAAAFCSPALSAPMGSDPPTSCCFSYTARKLPRNFVVDYYETSSLCSQPAVVFQTKRGKQVCADPSETWVQEYVNDLELN</sequence>
<gene>
    <name type="primary">CCL4</name>
    <name type="synonym">MIP1B</name>
    <name type="synonym">SCYA4</name>
</gene>
<accession>Q8HYQ2</accession>
<accession>Q8HYN3</accession>
<dbReference type="EMBL" id="AF449267">
    <property type="protein sequence ID" value="AAN76071.1"/>
    <property type="molecule type" value="mRNA"/>
</dbReference>
<dbReference type="EMBL" id="AF457196">
    <property type="protein sequence ID" value="AAN76986.1"/>
    <property type="molecule type" value="mRNA"/>
</dbReference>
<dbReference type="RefSeq" id="NP_001028045.1">
    <property type="nucleotide sequence ID" value="NM_001032873.1"/>
</dbReference>
<dbReference type="SMR" id="Q8HYQ2"/>
<dbReference type="FunCoup" id="Q8HYQ2">
    <property type="interactions" value="937"/>
</dbReference>
<dbReference type="STRING" id="9544.ENSMMUP00000041831"/>
<dbReference type="PaxDb" id="9544-ENSMMUP00000026461"/>
<dbReference type="GeneID" id="574217"/>
<dbReference type="KEGG" id="mcc:574217"/>
<dbReference type="CTD" id="388372"/>
<dbReference type="eggNOG" id="ENOG502S8M4">
    <property type="taxonomic scope" value="Eukaryota"/>
</dbReference>
<dbReference type="InParanoid" id="Q8HYQ2"/>
<dbReference type="OrthoDB" id="9512143at2759"/>
<dbReference type="Proteomes" id="UP000006718">
    <property type="component" value="Unassembled WGS sequence"/>
</dbReference>
<dbReference type="GO" id="GO:0005615">
    <property type="term" value="C:extracellular space"/>
    <property type="evidence" value="ECO:0000318"/>
    <property type="project" value="GO_Central"/>
</dbReference>
<dbReference type="GO" id="GO:0048020">
    <property type="term" value="F:CCR chemokine receptor binding"/>
    <property type="evidence" value="ECO:0000318"/>
    <property type="project" value="GO_Central"/>
</dbReference>
<dbReference type="GO" id="GO:0008009">
    <property type="term" value="F:chemokine activity"/>
    <property type="evidence" value="ECO:0000318"/>
    <property type="project" value="GO_Central"/>
</dbReference>
<dbReference type="GO" id="GO:0061844">
    <property type="term" value="P:antimicrobial humoral immune response mediated by antimicrobial peptide"/>
    <property type="evidence" value="ECO:0000318"/>
    <property type="project" value="GO_Central"/>
</dbReference>
<dbReference type="GO" id="GO:0070098">
    <property type="term" value="P:chemokine-mediated signaling pathway"/>
    <property type="evidence" value="ECO:0000318"/>
    <property type="project" value="GO_Central"/>
</dbReference>
<dbReference type="GO" id="GO:0048245">
    <property type="term" value="P:eosinophil chemotaxis"/>
    <property type="evidence" value="ECO:0000318"/>
    <property type="project" value="GO_Central"/>
</dbReference>
<dbReference type="GO" id="GO:0006954">
    <property type="term" value="P:inflammatory response"/>
    <property type="evidence" value="ECO:0000318"/>
    <property type="project" value="GO_Central"/>
</dbReference>
<dbReference type="GO" id="GO:0030335">
    <property type="term" value="P:positive regulation of cell migration"/>
    <property type="evidence" value="ECO:0000318"/>
    <property type="project" value="GO_Central"/>
</dbReference>
<dbReference type="CDD" id="cd00272">
    <property type="entry name" value="Chemokine_CC"/>
    <property type="match status" value="1"/>
</dbReference>
<dbReference type="FunFam" id="2.40.50.40:FF:000002">
    <property type="entry name" value="C-C motif chemokine"/>
    <property type="match status" value="1"/>
</dbReference>
<dbReference type="Gene3D" id="2.40.50.40">
    <property type="match status" value="1"/>
</dbReference>
<dbReference type="InterPro" id="IPR039809">
    <property type="entry name" value="Chemokine_b/g/d"/>
</dbReference>
<dbReference type="InterPro" id="IPR000827">
    <property type="entry name" value="Chemokine_CC_CS"/>
</dbReference>
<dbReference type="InterPro" id="IPR001811">
    <property type="entry name" value="Chemokine_IL8-like_dom"/>
</dbReference>
<dbReference type="InterPro" id="IPR036048">
    <property type="entry name" value="Interleukin_8-like_sf"/>
</dbReference>
<dbReference type="PANTHER" id="PTHR12015:SF103">
    <property type="entry name" value="C-C MOTIF CHEMOKINE 4-RELATED"/>
    <property type="match status" value="1"/>
</dbReference>
<dbReference type="PANTHER" id="PTHR12015">
    <property type="entry name" value="SMALL INDUCIBLE CYTOKINE A"/>
    <property type="match status" value="1"/>
</dbReference>
<dbReference type="Pfam" id="PF00048">
    <property type="entry name" value="IL8"/>
    <property type="match status" value="1"/>
</dbReference>
<dbReference type="SMART" id="SM00199">
    <property type="entry name" value="SCY"/>
    <property type="match status" value="1"/>
</dbReference>
<dbReference type="SUPFAM" id="SSF54117">
    <property type="entry name" value="Interleukin 8-like chemokines"/>
    <property type="match status" value="1"/>
</dbReference>
<dbReference type="PROSITE" id="PS00472">
    <property type="entry name" value="SMALL_CYTOKINES_CC"/>
    <property type="match status" value="1"/>
</dbReference>
<feature type="signal peptide" evidence="1">
    <location>
        <begin position="1"/>
        <end position="23"/>
    </location>
</feature>
<feature type="chain" id="PRO_0000326237" description="C-C motif chemokine 4">
    <location>
        <begin position="24"/>
        <end position="92"/>
    </location>
</feature>
<feature type="disulfide bond" evidence="1">
    <location>
        <begin position="34"/>
        <end position="58"/>
    </location>
</feature>
<feature type="disulfide bond" evidence="1">
    <location>
        <begin position="35"/>
        <end position="74"/>
    </location>
</feature>
<feature type="sequence conflict" description="In Ref. 1; AAN76986." evidence="3" ref="1">
    <original>A</original>
    <variation>V</variation>
    <location>
        <position position="40"/>
    </location>
</feature>
<proteinExistence type="evidence at transcript level"/>
<protein>
    <recommendedName>
        <fullName>C-C motif chemokine 4</fullName>
    </recommendedName>
    <alternativeName>
        <fullName>Macrophage inflammatory protein 1-beta</fullName>
        <shortName>MIP-1-beta</shortName>
    </alternativeName>
    <alternativeName>
        <fullName>Small-inducible cytokine A4</fullName>
    </alternativeName>
</protein>
<name>CCL4_MACMU</name>